<sequence length="569" mass="61152">MAYTLDRGSYAAMFGPTVGDRVRLADTELIIEVEQDYTTYGEEVKFGGGKVIRDGMGQSQHSRQEGAVDTVITNALIVDHWGIVKADVGIKDGRICAIGKAGNPDVQPNVDIIIGPGTEAIAGEGRILTAGGIDAHIHWICPQQIEDALHSGITTMLGGGTGPAEGTNATTCTPGPWHIARMLQAAEGLPMNMGFFGKGNASRPQGLEEQLRAGACGLKLHEDWGTTPSAIDVCLSVAEKWDVQVAIHTDTLNESGFVENTTAAFKGRTIHAFHTEGAGGGHAPDIIKLCGEANVLPSSTNPTRPFTRNTLDEHLDMLMVCHHLDSRIPEDVAFAESRIRRETIAAEDILHDLGAFSMIASDSQAMGRVGEVIIRTWQTADKMKRQRGALPEERGQNDNQRVKRYIAKYTINPAITHGIAHYVGSVAVGKLADLVLWKPMFFGVKPDLVLKCGTIASAAMGDPNASIPTPQPVHYRPMFGAFGGALTHSAVNFVSQAGLDGEIAQQFGLRKTLLPVVGCRTIGKADMVHNSATPHMEVDPETYEVRADGRLLTCEPATVLPLAQRYFLF</sequence>
<reference key="1">
    <citation type="journal article" date="2009" name="Appl. Environ. Microbiol.">
        <title>Complete genome sequence of the chemolithoautotrophic marine magnetotactic coccus strain MC-1.</title>
        <authorList>
            <person name="Schubbe S."/>
            <person name="Williams T.J."/>
            <person name="Xie G."/>
            <person name="Kiss H.E."/>
            <person name="Brettin T.S."/>
            <person name="Martinez D."/>
            <person name="Ross C.A."/>
            <person name="Schuler D."/>
            <person name="Cox B.L."/>
            <person name="Nealson K.H."/>
            <person name="Bazylinski D.A."/>
        </authorList>
    </citation>
    <scope>NUCLEOTIDE SEQUENCE [LARGE SCALE GENOMIC DNA]</scope>
    <source>
        <strain>ATCC BAA-1437 / JCM 17883 / MC-1</strain>
    </source>
</reference>
<comment type="catalytic activity">
    <reaction evidence="1">
        <text>urea + 2 H2O + H(+) = hydrogencarbonate + 2 NH4(+)</text>
        <dbReference type="Rhea" id="RHEA:20557"/>
        <dbReference type="ChEBI" id="CHEBI:15377"/>
        <dbReference type="ChEBI" id="CHEBI:15378"/>
        <dbReference type="ChEBI" id="CHEBI:16199"/>
        <dbReference type="ChEBI" id="CHEBI:17544"/>
        <dbReference type="ChEBI" id="CHEBI:28938"/>
        <dbReference type="EC" id="3.5.1.5"/>
    </reaction>
</comment>
<comment type="cofactor">
    <cofactor evidence="1">
        <name>Ni cation</name>
        <dbReference type="ChEBI" id="CHEBI:25516"/>
    </cofactor>
    <text evidence="1">Binds 2 nickel ions per subunit.</text>
</comment>
<comment type="pathway">
    <text evidence="1">Nitrogen metabolism; urea degradation; CO(2) and NH(3) from urea (urease route): step 1/1.</text>
</comment>
<comment type="subunit">
    <text evidence="1">Heterotrimer of UreA (gamma), UreB (beta) and UreC (alpha) subunits. Three heterotrimers associate to form the active enzyme.</text>
</comment>
<comment type="subcellular location">
    <subcellularLocation>
        <location evidence="1">Cytoplasm</location>
    </subcellularLocation>
</comment>
<comment type="PTM">
    <text evidence="1">Carboxylation allows a single lysine to coordinate two nickel ions.</text>
</comment>
<comment type="similarity">
    <text evidence="1">Belongs to the metallo-dependent hydrolases superfamily. Urease alpha subunit family.</text>
</comment>
<accession>A0L6F2</accession>
<feature type="chain" id="PRO_1000070663" description="Urease subunit alpha">
    <location>
        <begin position="1"/>
        <end position="569"/>
    </location>
</feature>
<feature type="domain" description="Urease" evidence="1">
    <location>
        <begin position="131"/>
        <end position="569"/>
    </location>
</feature>
<feature type="active site" description="Proton donor" evidence="1">
    <location>
        <position position="322"/>
    </location>
</feature>
<feature type="binding site" evidence="1">
    <location>
        <position position="136"/>
    </location>
    <ligand>
        <name>Ni(2+)</name>
        <dbReference type="ChEBI" id="CHEBI:49786"/>
        <label>1</label>
    </ligand>
</feature>
<feature type="binding site" evidence="1">
    <location>
        <position position="138"/>
    </location>
    <ligand>
        <name>Ni(2+)</name>
        <dbReference type="ChEBI" id="CHEBI:49786"/>
        <label>1</label>
    </ligand>
</feature>
<feature type="binding site" description="via carbamate group" evidence="1">
    <location>
        <position position="219"/>
    </location>
    <ligand>
        <name>Ni(2+)</name>
        <dbReference type="ChEBI" id="CHEBI:49786"/>
        <label>1</label>
    </ligand>
</feature>
<feature type="binding site" description="via carbamate group" evidence="1">
    <location>
        <position position="219"/>
    </location>
    <ligand>
        <name>Ni(2+)</name>
        <dbReference type="ChEBI" id="CHEBI:49786"/>
        <label>2</label>
    </ligand>
</feature>
<feature type="binding site" evidence="1">
    <location>
        <position position="221"/>
    </location>
    <ligand>
        <name>substrate</name>
    </ligand>
</feature>
<feature type="binding site" evidence="1">
    <location>
        <position position="248"/>
    </location>
    <ligand>
        <name>Ni(2+)</name>
        <dbReference type="ChEBI" id="CHEBI:49786"/>
        <label>2</label>
    </ligand>
</feature>
<feature type="binding site" evidence="1">
    <location>
        <position position="274"/>
    </location>
    <ligand>
        <name>Ni(2+)</name>
        <dbReference type="ChEBI" id="CHEBI:49786"/>
        <label>2</label>
    </ligand>
</feature>
<feature type="binding site" evidence="1">
    <location>
        <position position="362"/>
    </location>
    <ligand>
        <name>Ni(2+)</name>
        <dbReference type="ChEBI" id="CHEBI:49786"/>
        <label>1</label>
    </ligand>
</feature>
<feature type="modified residue" description="N6-carboxylysine" evidence="1">
    <location>
        <position position="219"/>
    </location>
</feature>
<proteinExistence type="inferred from homology"/>
<keyword id="KW-0963">Cytoplasm</keyword>
<keyword id="KW-0378">Hydrolase</keyword>
<keyword id="KW-0479">Metal-binding</keyword>
<keyword id="KW-0533">Nickel</keyword>
<keyword id="KW-1185">Reference proteome</keyword>
<gene>
    <name evidence="1" type="primary">ureC</name>
    <name type="ordered locus">Mmc1_1027</name>
</gene>
<dbReference type="EC" id="3.5.1.5" evidence="1"/>
<dbReference type="EMBL" id="CP000471">
    <property type="protein sequence ID" value="ABK43545.1"/>
    <property type="molecule type" value="Genomic_DNA"/>
</dbReference>
<dbReference type="RefSeq" id="WP_011712702.1">
    <property type="nucleotide sequence ID" value="NC_008576.1"/>
</dbReference>
<dbReference type="SMR" id="A0L6F2"/>
<dbReference type="STRING" id="156889.Mmc1_1027"/>
<dbReference type="KEGG" id="mgm:Mmc1_1027"/>
<dbReference type="eggNOG" id="COG0804">
    <property type="taxonomic scope" value="Bacteria"/>
</dbReference>
<dbReference type="HOGENOM" id="CLU_000980_0_0_5"/>
<dbReference type="OrthoDB" id="9802793at2"/>
<dbReference type="UniPathway" id="UPA00258">
    <property type="reaction ID" value="UER00370"/>
</dbReference>
<dbReference type="Proteomes" id="UP000002586">
    <property type="component" value="Chromosome"/>
</dbReference>
<dbReference type="GO" id="GO:0005737">
    <property type="term" value="C:cytoplasm"/>
    <property type="evidence" value="ECO:0007669"/>
    <property type="project" value="UniProtKB-SubCell"/>
</dbReference>
<dbReference type="GO" id="GO:0016151">
    <property type="term" value="F:nickel cation binding"/>
    <property type="evidence" value="ECO:0007669"/>
    <property type="project" value="UniProtKB-UniRule"/>
</dbReference>
<dbReference type="GO" id="GO:0009039">
    <property type="term" value="F:urease activity"/>
    <property type="evidence" value="ECO:0007669"/>
    <property type="project" value="UniProtKB-UniRule"/>
</dbReference>
<dbReference type="GO" id="GO:0043419">
    <property type="term" value="P:urea catabolic process"/>
    <property type="evidence" value="ECO:0007669"/>
    <property type="project" value="UniProtKB-UniRule"/>
</dbReference>
<dbReference type="CDD" id="cd00375">
    <property type="entry name" value="Urease_alpha"/>
    <property type="match status" value="1"/>
</dbReference>
<dbReference type="Gene3D" id="3.20.20.140">
    <property type="entry name" value="Metal-dependent hydrolases"/>
    <property type="match status" value="1"/>
</dbReference>
<dbReference type="Gene3D" id="2.30.40.10">
    <property type="entry name" value="Urease, subunit C, domain 1"/>
    <property type="match status" value="1"/>
</dbReference>
<dbReference type="HAMAP" id="MF_01953">
    <property type="entry name" value="Urease_alpha"/>
    <property type="match status" value="1"/>
</dbReference>
<dbReference type="InterPro" id="IPR006680">
    <property type="entry name" value="Amidohydro-rel"/>
</dbReference>
<dbReference type="InterPro" id="IPR011059">
    <property type="entry name" value="Metal-dep_hydrolase_composite"/>
</dbReference>
<dbReference type="InterPro" id="IPR032466">
    <property type="entry name" value="Metal_Hydrolase"/>
</dbReference>
<dbReference type="InterPro" id="IPR011612">
    <property type="entry name" value="Urease_alpha_N_dom"/>
</dbReference>
<dbReference type="InterPro" id="IPR050112">
    <property type="entry name" value="Urease_alpha_subunit"/>
</dbReference>
<dbReference type="InterPro" id="IPR017950">
    <property type="entry name" value="Urease_AS"/>
</dbReference>
<dbReference type="InterPro" id="IPR005848">
    <property type="entry name" value="Urease_asu"/>
</dbReference>
<dbReference type="InterPro" id="IPR017951">
    <property type="entry name" value="Urease_asu_c"/>
</dbReference>
<dbReference type="InterPro" id="IPR029754">
    <property type="entry name" value="Urease_Ni-bd"/>
</dbReference>
<dbReference type="NCBIfam" id="NF009685">
    <property type="entry name" value="PRK13206.1"/>
    <property type="match status" value="1"/>
</dbReference>
<dbReference type="NCBIfam" id="NF009686">
    <property type="entry name" value="PRK13207.1"/>
    <property type="match status" value="1"/>
</dbReference>
<dbReference type="NCBIfam" id="TIGR01792">
    <property type="entry name" value="urease_alph"/>
    <property type="match status" value="1"/>
</dbReference>
<dbReference type="PANTHER" id="PTHR43440">
    <property type="entry name" value="UREASE"/>
    <property type="match status" value="1"/>
</dbReference>
<dbReference type="PANTHER" id="PTHR43440:SF1">
    <property type="entry name" value="UREASE"/>
    <property type="match status" value="1"/>
</dbReference>
<dbReference type="Pfam" id="PF01979">
    <property type="entry name" value="Amidohydro_1"/>
    <property type="match status" value="1"/>
</dbReference>
<dbReference type="Pfam" id="PF00449">
    <property type="entry name" value="Urease_alpha"/>
    <property type="match status" value="1"/>
</dbReference>
<dbReference type="PRINTS" id="PR01752">
    <property type="entry name" value="UREASE"/>
</dbReference>
<dbReference type="SUPFAM" id="SSF51338">
    <property type="entry name" value="Composite domain of metallo-dependent hydrolases"/>
    <property type="match status" value="1"/>
</dbReference>
<dbReference type="SUPFAM" id="SSF51556">
    <property type="entry name" value="Metallo-dependent hydrolases"/>
    <property type="match status" value="1"/>
</dbReference>
<dbReference type="PROSITE" id="PS01120">
    <property type="entry name" value="UREASE_1"/>
    <property type="match status" value="1"/>
</dbReference>
<dbReference type="PROSITE" id="PS00145">
    <property type="entry name" value="UREASE_2"/>
    <property type="match status" value="1"/>
</dbReference>
<dbReference type="PROSITE" id="PS51368">
    <property type="entry name" value="UREASE_3"/>
    <property type="match status" value="1"/>
</dbReference>
<protein>
    <recommendedName>
        <fullName evidence="1">Urease subunit alpha</fullName>
        <ecNumber evidence="1">3.5.1.5</ecNumber>
    </recommendedName>
    <alternativeName>
        <fullName evidence="1">Urea amidohydrolase subunit alpha</fullName>
    </alternativeName>
</protein>
<organism>
    <name type="scientific">Magnetococcus marinus (strain ATCC BAA-1437 / JCM 17883 / MC-1)</name>
    <dbReference type="NCBI Taxonomy" id="156889"/>
    <lineage>
        <taxon>Bacteria</taxon>
        <taxon>Pseudomonadati</taxon>
        <taxon>Pseudomonadota</taxon>
        <taxon>Alphaproteobacteria</taxon>
        <taxon>Magnetococcales</taxon>
        <taxon>Magnetococcaceae</taxon>
        <taxon>Magnetococcus</taxon>
    </lineage>
</organism>
<evidence type="ECO:0000255" key="1">
    <source>
        <dbReference type="HAMAP-Rule" id="MF_01953"/>
    </source>
</evidence>
<name>URE1_MAGMM</name>